<accession>Q1JK85</accession>
<evidence type="ECO:0000255" key="1">
    <source>
        <dbReference type="HAMAP-Rule" id="MF_00141"/>
    </source>
</evidence>
<name>EFP_STRPC</name>
<organism>
    <name type="scientific">Streptococcus pyogenes serotype M12 (strain MGAS9429)</name>
    <dbReference type="NCBI Taxonomy" id="370551"/>
    <lineage>
        <taxon>Bacteria</taxon>
        <taxon>Bacillati</taxon>
        <taxon>Bacillota</taxon>
        <taxon>Bacilli</taxon>
        <taxon>Lactobacillales</taxon>
        <taxon>Streptococcaceae</taxon>
        <taxon>Streptococcus</taxon>
    </lineage>
</organism>
<gene>
    <name evidence="1" type="primary">efp</name>
    <name type="ordered locus">MGAS9429_Spy1551</name>
</gene>
<comment type="function">
    <text evidence="1">Involved in peptide bond synthesis. Stimulates efficient translation and peptide-bond synthesis on native or reconstituted 70S ribosomes in vitro. Probably functions indirectly by altering the affinity of the ribosome for aminoacyl-tRNA, thus increasing their reactivity as acceptors for peptidyl transferase.</text>
</comment>
<comment type="pathway">
    <text evidence="1">Protein biosynthesis; polypeptide chain elongation.</text>
</comment>
<comment type="subcellular location">
    <subcellularLocation>
        <location evidence="1">Cytoplasm</location>
    </subcellularLocation>
</comment>
<comment type="similarity">
    <text evidence="1">Belongs to the elongation factor P family.</text>
</comment>
<feature type="chain" id="PRO_1000010873" description="Elongation factor P">
    <location>
        <begin position="1"/>
        <end position="185"/>
    </location>
</feature>
<proteinExistence type="inferred from homology"/>
<keyword id="KW-0963">Cytoplasm</keyword>
<keyword id="KW-0251">Elongation factor</keyword>
<keyword id="KW-0648">Protein biosynthesis</keyword>
<reference key="1">
    <citation type="journal article" date="2006" name="Proc. Natl. Acad. Sci. U.S.A.">
        <title>Molecular genetic anatomy of inter- and intraserotype variation in the human bacterial pathogen group A Streptococcus.</title>
        <authorList>
            <person name="Beres S.B."/>
            <person name="Richter E.W."/>
            <person name="Nagiec M.J."/>
            <person name="Sumby P."/>
            <person name="Porcella S.F."/>
            <person name="DeLeo F.R."/>
            <person name="Musser J.M."/>
        </authorList>
    </citation>
    <scope>NUCLEOTIDE SEQUENCE [LARGE SCALE GENOMIC DNA]</scope>
    <source>
        <strain>MGAS9429</strain>
    </source>
</reference>
<protein>
    <recommendedName>
        <fullName evidence="1">Elongation factor P</fullName>
        <shortName evidence="1">EF-P</shortName>
    </recommendedName>
</protein>
<dbReference type="EMBL" id="CP000259">
    <property type="protein sequence ID" value="ABF32738.1"/>
    <property type="molecule type" value="Genomic_DNA"/>
</dbReference>
<dbReference type="RefSeq" id="WP_002988496.1">
    <property type="nucleotide sequence ID" value="NC_008021.1"/>
</dbReference>
<dbReference type="SMR" id="Q1JK85"/>
<dbReference type="GeneID" id="69900351"/>
<dbReference type="KEGG" id="spk:MGAS9429_Spy1551"/>
<dbReference type="HOGENOM" id="CLU_074944_3_0_9"/>
<dbReference type="UniPathway" id="UPA00345"/>
<dbReference type="Proteomes" id="UP000002433">
    <property type="component" value="Chromosome"/>
</dbReference>
<dbReference type="GO" id="GO:0005737">
    <property type="term" value="C:cytoplasm"/>
    <property type="evidence" value="ECO:0007669"/>
    <property type="project" value="UniProtKB-SubCell"/>
</dbReference>
<dbReference type="GO" id="GO:0003746">
    <property type="term" value="F:translation elongation factor activity"/>
    <property type="evidence" value="ECO:0007669"/>
    <property type="project" value="UniProtKB-UniRule"/>
</dbReference>
<dbReference type="GO" id="GO:0043043">
    <property type="term" value="P:peptide biosynthetic process"/>
    <property type="evidence" value="ECO:0007669"/>
    <property type="project" value="InterPro"/>
</dbReference>
<dbReference type="CDD" id="cd04470">
    <property type="entry name" value="S1_EF-P_repeat_1"/>
    <property type="match status" value="1"/>
</dbReference>
<dbReference type="CDD" id="cd05794">
    <property type="entry name" value="S1_EF-P_repeat_2"/>
    <property type="match status" value="1"/>
</dbReference>
<dbReference type="FunFam" id="2.30.30.30:FF:000003">
    <property type="entry name" value="Elongation factor P"/>
    <property type="match status" value="1"/>
</dbReference>
<dbReference type="FunFam" id="2.40.50.140:FF:000004">
    <property type="entry name" value="Elongation factor P"/>
    <property type="match status" value="1"/>
</dbReference>
<dbReference type="FunFam" id="2.40.50.140:FF:000009">
    <property type="entry name" value="Elongation factor P"/>
    <property type="match status" value="1"/>
</dbReference>
<dbReference type="Gene3D" id="2.30.30.30">
    <property type="match status" value="1"/>
</dbReference>
<dbReference type="Gene3D" id="2.40.50.140">
    <property type="entry name" value="Nucleic acid-binding proteins"/>
    <property type="match status" value="2"/>
</dbReference>
<dbReference type="HAMAP" id="MF_00141">
    <property type="entry name" value="EF_P"/>
    <property type="match status" value="1"/>
</dbReference>
<dbReference type="InterPro" id="IPR015365">
    <property type="entry name" value="Elong-fact-P_C"/>
</dbReference>
<dbReference type="InterPro" id="IPR012340">
    <property type="entry name" value="NA-bd_OB-fold"/>
</dbReference>
<dbReference type="InterPro" id="IPR014722">
    <property type="entry name" value="Rib_uL2_dom2"/>
</dbReference>
<dbReference type="InterPro" id="IPR020599">
    <property type="entry name" value="Transl_elong_fac_P/YeiP"/>
</dbReference>
<dbReference type="InterPro" id="IPR013185">
    <property type="entry name" value="Transl_elong_KOW-like"/>
</dbReference>
<dbReference type="InterPro" id="IPR001059">
    <property type="entry name" value="Transl_elong_P/YeiP_cen"/>
</dbReference>
<dbReference type="InterPro" id="IPR013852">
    <property type="entry name" value="Transl_elong_P/YeiP_CS"/>
</dbReference>
<dbReference type="InterPro" id="IPR011768">
    <property type="entry name" value="Transl_elongation_fac_P"/>
</dbReference>
<dbReference type="InterPro" id="IPR008991">
    <property type="entry name" value="Translation_prot_SH3-like_sf"/>
</dbReference>
<dbReference type="NCBIfam" id="TIGR00038">
    <property type="entry name" value="efp"/>
    <property type="match status" value="1"/>
</dbReference>
<dbReference type="NCBIfam" id="NF001810">
    <property type="entry name" value="PRK00529.1"/>
    <property type="match status" value="1"/>
</dbReference>
<dbReference type="PANTHER" id="PTHR30053">
    <property type="entry name" value="ELONGATION FACTOR P"/>
    <property type="match status" value="1"/>
</dbReference>
<dbReference type="PANTHER" id="PTHR30053:SF12">
    <property type="entry name" value="ELONGATION FACTOR P (EF-P) FAMILY PROTEIN"/>
    <property type="match status" value="1"/>
</dbReference>
<dbReference type="Pfam" id="PF01132">
    <property type="entry name" value="EFP"/>
    <property type="match status" value="1"/>
</dbReference>
<dbReference type="Pfam" id="PF08207">
    <property type="entry name" value="EFP_N"/>
    <property type="match status" value="1"/>
</dbReference>
<dbReference type="Pfam" id="PF09285">
    <property type="entry name" value="Elong-fact-P_C"/>
    <property type="match status" value="1"/>
</dbReference>
<dbReference type="PIRSF" id="PIRSF005901">
    <property type="entry name" value="EF-P"/>
    <property type="match status" value="1"/>
</dbReference>
<dbReference type="SMART" id="SM01185">
    <property type="entry name" value="EFP"/>
    <property type="match status" value="1"/>
</dbReference>
<dbReference type="SMART" id="SM00841">
    <property type="entry name" value="Elong-fact-P_C"/>
    <property type="match status" value="1"/>
</dbReference>
<dbReference type="SUPFAM" id="SSF50249">
    <property type="entry name" value="Nucleic acid-binding proteins"/>
    <property type="match status" value="2"/>
</dbReference>
<dbReference type="SUPFAM" id="SSF50104">
    <property type="entry name" value="Translation proteins SH3-like domain"/>
    <property type="match status" value="1"/>
</dbReference>
<dbReference type="PROSITE" id="PS01275">
    <property type="entry name" value="EFP"/>
    <property type="match status" value="1"/>
</dbReference>
<sequence>MIEASKLKAGMTFEAEGKLIRVLEASHHKPGKGNTIMRMKLRDVRTGSTFDTTYRPDEKFEQAIIETVPAQYLYKMDDTAYFMNTDTYDQYEIPVANVEQELLYILENSDVKIQFYGSEVIGVTVPTTVELTVAETQPSIKGATVTGSGKPATLETGLVVNVPDFIEAGQKLIINTAEGTYVSRA</sequence>